<keyword id="KW-0007">Acetylation</keyword>
<keyword id="KW-0028">Amino-acid biosynthesis</keyword>
<keyword id="KW-0963">Cytoplasm</keyword>
<keyword id="KW-0554">One-carbon metabolism</keyword>
<keyword id="KW-0663">Pyridoxal phosphate</keyword>
<keyword id="KW-0808">Transferase</keyword>
<gene>
    <name evidence="1" type="primary">glyA</name>
    <name type="ordered locus">ECUMN_2871</name>
</gene>
<evidence type="ECO:0000255" key="1">
    <source>
        <dbReference type="HAMAP-Rule" id="MF_00051"/>
    </source>
</evidence>
<reference key="1">
    <citation type="journal article" date="2009" name="PLoS Genet.">
        <title>Organised genome dynamics in the Escherichia coli species results in highly diverse adaptive paths.</title>
        <authorList>
            <person name="Touchon M."/>
            <person name="Hoede C."/>
            <person name="Tenaillon O."/>
            <person name="Barbe V."/>
            <person name="Baeriswyl S."/>
            <person name="Bidet P."/>
            <person name="Bingen E."/>
            <person name="Bonacorsi S."/>
            <person name="Bouchier C."/>
            <person name="Bouvet O."/>
            <person name="Calteau A."/>
            <person name="Chiapello H."/>
            <person name="Clermont O."/>
            <person name="Cruveiller S."/>
            <person name="Danchin A."/>
            <person name="Diard M."/>
            <person name="Dossat C."/>
            <person name="Karoui M.E."/>
            <person name="Frapy E."/>
            <person name="Garry L."/>
            <person name="Ghigo J.M."/>
            <person name="Gilles A.M."/>
            <person name="Johnson J."/>
            <person name="Le Bouguenec C."/>
            <person name="Lescat M."/>
            <person name="Mangenot S."/>
            <person name="Martinez-Jehanne V."/>
            <person name="Matic I."/>
            <person name="Nassif X."/>
            <person name="Oztas S."/>
            <person name="Petit M.A."/>
            <person name="Pichon C."/>
            <person name="Rouy Z."/>
            <person name="Ruf C.S."/>
            <person name="Schneider D."/>
            <person name="Tourret J."/>
            <person name="Vacherie B."/>
            <person name="Vallenet D."/>
            <person name="Medigue C."/>
            <person name="Rocha E.P.C."/>
            <person name="Denamur E."/>
        </authorList>
    </citation>
    <scope>NUCLEOTIDE SEQUENCE [LARGE SCALE GENOMIC DNA]</scope>
    <source>
        <strain>UMN026 / ExPEC</strain>
    </source>
</reference>
<dbReference type="EC" id="2.1.2.1" evidence="1"/>
<dbReference type="EMBL" id="CU928163">
    <property type="protein sequence ID" value="CAR14047.1"/>
    <property type="molecule type" value="Genomic_DNA"/>
</dbReference>
<dbReference type="RefSeq" id="WP_000919149.1">
    <property type="nucleotide sequence ID" value="NC_011751.1"/>
</dbReference>
<dbReference type="RefSeq" id="YP_002413573.1">
    <property type="nucleotide sequence ID" value="NC_011751.1"/>
</dbReference>
<dbReference type="SMR" id="B7N6D8"/>
<dbReference type="STRING" id="585056.ECUMN_2871"/>
<dbReference type="KEGG" id="eum:ECUMN_2871"/>
<dbReference type="PATRIC" id="fig|585056.7.peg.3058"/>
<dbReference type="HOGENOM" id="CLU_022477_2_1_6"/>
<dbReference type="UniPathway" id="UPA00193"/>
<dbReference type="UniPathway" id="UPA00288">
    <property type="reaction ID" value="UER01023"/>
</dbReference>
<dbReference type="Proteomes" id="UP000007097">
    <property type="component" value="Chromosome"/>
</dbReference>
<dbReference type="GO" id="GO:0005829">
    <property type="term" value="C:cytosol"/>
    <property type="evidence" value="ECO:0007669"/>
    <property type="project" value="TreeGrafter"/>
</dbReference>
<dbReference type="GO" id="GO:0004372">
    <property type="term" value="F:glycine hydroxymethyltransferase activity"/>
    <property type="evidence" value="ECO:0007669"/>
    <property type="project" value="UniProtKB-UniRule"/>
</dbReference>
<dbReference type="GO" id="GO:0030170">
    <property type="term" value="F:pyridoxal phosphate binding"/>
    <property type="evidence" value="ECO:0007669"/>
    <property type="project" value="UniProtKB-UniRule"/>
</dbReference>
<dbReference type="GO" id="GO:0019264">
    <property type="term" value="P:glycine biosynthetic process from serine"/>
    <property type="evidence" value="ECO:0007669"/>
    <property type="project" value="UniProtKB-UniRule"/>
</dbReference>
<dbReference type="GO" id="GO:0035999">
    <property type="term" value="P:tetrahydrofolate interconversion"/>
    <property type="evidence" value="ECO:0007669"/>
    <property type="project" value="UniProtKB-UniRule"/>
</dbReference>
<dbReference type="CDD" id="cd00378">
    <property type="entry name" value="SHMT"/>
    <property type="match status" value="1"/>
</dbReference>
<dbReference type="FunFam" id="3.40.640.10:FF:000001">
    <property type="entry name" value="Serine hydroxymethyltransferase"/>
    <property type="match status" value="1"/>
</dbReference>
<dbReference type="FunFam" id="3.90.1150.10:FF:000003">
    <property type="entry name" value="Serine hydroxymethyltransferase"/>
    <property type="match status" value="1"/>
</dbReference>
<dbReference type="Gene3D" id="3.90.1150.10">
    <property type="entry name" value="Aspartate Aminotransferase, domain 1"/>
    <property type="match status" value="1"/>
</dbReference>
<dbReference type="Gene3D" id="3.40.640.10">
    <property type="entry name" value="Type I PLP-dependent aspartate aminotransferase-like (Major domain)"/>
    <property type="match status" value="1"/>
</dbReference>
<dbReference type="HAMAP" id="MF_00051">
    <property type="entry name" value="SHMT"/>
    <property type="match status" value="1"/>
</dbReference>
<dbReference type="InterPro" id="IPR015424">
    <property type="entry name" value="PyrdxlP-dep_Trfase"/>
</dbReference>
<dbReference type="InterPro" id="IPR015421">
    <property type="entry name" value="PyrdxlP-dep_Trfase_major"/>
</dbReference>
<dbReference type="InterPro" id="IPR015422">
    <property type="entry name" value="PyrdxlP-dep_Trfase_small"/>
</dbReference>
<dbReference type="InterPro" id="IPR001085">
    <property type="entry name" value="Ser_HO-MeTrfase"/>
</dbReference>
<dbReference type="InterPro" id="IPR049943">
    <property type="entry name" value="Ser_HO-MeTrfase-like"/>
</dbReference>
<dbReference type="InterPro" id="IPR019798">
    <property type="entry name" value="Ser_HO-MeTrfase_PLP_BS"/>
</dbReference>
<dbReference type="InterPro" id="IPR039429">
    <property type="entry name" value="SHMT-like_dom"/>
</dbReference>
<dbReference type="NCBIfam" id="NF000586">
    <property type="entry name" value="PRK00011.1"/>
    <property type="match status" value="1"/>
</dbReference>
<dbReference type="PANTHER" id="PTHR11680">
    <property type="entry name" value="SERINE HYDROXYMETHYLTRANSFERASE"/>
    <property type="match status" value="1"/>
</dbReference>
<dbReference type="PANTHER" id="PTHR11680:SF50">
    <property type="entry name" value="SERINE HYDROXYMETHYLTRANSFERASE"/>
    <property type="match status" value="1"/>
</dbReference>
<dbReference type="Pfam" id="PF00464">
    <property type="entry name" value="SHMT"/>
    <property type="match status" value="1"/>
</dbReference>
<dbReference type="PIRSF" id="PIRSF000412">
    <property type="entry name" value="SHMT"/>
    <property type="match status" value="1"/>
</dbReference>
<dbReference type="SUPFAM" id="SSF53383">
    <property type="entry name" value="PLP-dependent transferases"/>
    <property type="match status" value="1"/>
</dbReference>
<dbReference type="PROSITE" id="PS00096">
    <property type="entry name" value="SHMT"/>
    <property type="match status" value="1"/>
</dbReference>
<feature type="chain" id="PRO_1000116831" description="Serine hydroxymethyltransferase">
    <location>
        <begin position="1"/>
        <end position="417"/>
    </location>
</feature>
<feature type="binding site" evidence="1">
    <location>
        <position position="121"/>
    </location>
    <ligand>
        <name>(6S)-5,6,7,8-tetrahydrofolate</name>
        <dbReference type="ChEBI" id="CHEBI:57453"/>
    </ligand>
</feature>
<feature type="binding site" evidence="1">
    <location>
        <begin position="125"/>
        <end position="127"/>
    </location>
    <ligand>
        <name>(6S)-5,6,7,8-tetrahydrofolate</name>
        <dbReference type="ChEBI" id="CHEBI:57453"/>
    </ligand>
</feature>
<feature type="binding site" evidence="1">
    <location>
        <begin position="355"/>
        <end position="357"/>
    </location>
    <ligand>
        <name>(6S)-5,6,7,8-tetrahydrofolate</name>
        <dbReference type="ChEBI" id="CHEBI:57453"/>
    </ligand>
</feature>
<feature type="site" description="Plays an important role in substrate specificity" evidence="1">
    <location>
        <position position="228"/>
    </location>
</feature>
<feature type="modified residue" description="N6-acetyllysine" evidence="1">
    <location>
        <position position="54"/>
    </location>
</feature>
<feature type="modified residue" description="N6-(pyridoxal phosphate)lysine" evidence="1">
    <location>
        <position position="229"/>
    </location>
</feature>
<feature type="modified residue" description="N6-acetyllysine" evidence="1">
    <location>
        <position position="250"/>
    </location>
</feature>
<feature type="modified residue" description="N6-acetyllysine" evidence="1">
    <location>
        <position position="285"/>
    </location>
</feature>
<feature type="modified residue" description="N6-acetyllysine" evidence="1">
    <location>
        <position position="354"/>
    </location>
</feature>
<feature type="modified residue" description="N6-acetyllysine" evidence="1">
    <location>
        <position position="375"/>
    </location>
</feature>
<protein>
    <recommendedName>
        <fullName evidence="1">Serine hydroxymethyltransferase</fullName>
        <shortName evidence="1">SHMT</shortName>
        <shortName evidence="1">Serine methylase</shortName>
        <ecNumber evidence="1">2.1.2.1</ecNumber>
    </recommendedName>
</protein>
<proteinExistence type="inferred from homology"/>
<accession>B7N6D8</accession>
<organism>
    <name type="scientific">Escherichia coli O17:K52:H18 (strain UMN026 / ExPEC)</name>
    <dbReference type="NCBI Taxonomy" id="585056"/>
    <lineage>
        <taxon>Bacteria</taxon>
        <taxon>Pseudomonadati</taxon>
        <taxon>Pseudomonadota</taxon>
        <taxon>Gammaproteobacteria</taxon>
        <taxon>Enterobacterales</taxon>
        <taxon>Enterobacteriaceae</taxon>
        <taxon>Escherichia</taxon>
    </lineage>
</organism>
<comment type="function">
    <text evidence="1">Catalyzes the reversible interconversion of serine and glycine with tetrahydrofolate (THF) serving as the one-carbon carrier. This reaction serves as the major source of one-carbon groups required for the biosynthesis of purines, thymidylate, methionine, and other important biomolecules. Also exhibits THF-independent aldolase activity toward beta-hydroxyamino acids, producing glycine and aldehydes, via a retro-aldol mechanism.</text>
</comment>
<comment type="catalytic activity">
    <reaction evidence="1">
        <text>(6R)-5,10-methylene-5,6,7,8-tetrahydrofolate + glycine + H2O = (6S)-5,6,7,8-tetrahydrofolate + L-serine</text>
        <dbReference type="Rhea" id="RHEA:15481"/>
        <dbReference type="ChEBI" id="CHEBI:15377"/>
        <dbReference type="ChEBI" id="CHEBI:15636"/>
        <dbReference type="ChEBI" id="CHEBI:33384"/>
        <dbReference type="ChEBI" id="CHEBI:57305"/>
        <dbReference type="ChEBI" id="CHEBI:57453"/>
        <dbReference type="EC" id="2.1.2.1"/>
    </reaction>
</comment>
<comment type="cofactor">
    <cofactor evidence="1">
        <name>pyridoxal 5'-phosphate</name>
        <dbReference type="ChEBI" id="CHEBI:597326"/>
    </cofactor>
</comment>
<comment type="pathway">
    <text evidence="1">One-carbon metabolism; tetrahydrofolate interconversion.</text>
</comment>
<comment type="pathway">
    <text evidence="1">Amino-acid biosynthesis; glycine biosynthesis; glycine from L-serine: step 1/1.</text>
</comment>
<comment type="subunit">
    <text evidence="1">Homodimer.</text>
</comment>
<comment type="subcellular location">
    <subcellularLocation>
        <location evidence="1">Cytoplasm</location>
    </subcellularLocation>
</comment>
<comment type="similarity">
    <text evidence="1">Belongs to the SHMT family.</text>
</comment>
<name>GLYA_ECOLU</name>
<sequence length="417" mass="45303">MLKREMNIADYDAELWQAMEQEKVRQEEHIELIASENYTSPRVMQAQGSQLTNKYAEGYPGKRYYGGCEYVDIVEQLAIDRAKELFGADYANVQPHSGSQANFAVYTALLEPGDTVLGMNLAHGGHLTHGSPVNFSGKLYNIVPYGIDASGHIDYADLEKQAKEHKPKMIIGGFSAYSGVVDWAKMREIADSIGAYLFVDMAHVAGLVAAGVYPNPVPHAHVVTTTTHKTLAGPRGGLILAKGGSEELYKKLNSAVFPGGQGGPLMHVIAGKAVALKEAMEPEFKTYQQQVAKNAKAMVEVFLERGYKVVSGGTDNHLFLVDLVDKNLTGKEADAALGRANITVNKNSVPNDPKSPFVTSGIRVGTPAITRRGFKEAEAKELAGWMCDVLDSINDEAVIERIKGKVLDICARYPVYA</sequence>